<feature type="signal peptide" evidence="3">
    <location>
        <begin position="1"/>
        <end position="14"/>
    </location>
</feature>
<feature type="chain" id="PRO_0000018002" description="Basic membrane protein B">
    <location>
        <begin position="15"/>
        <end position="341"/>
    </location>
</feature>
<feature type="lipid moiety-binding region" description="N-palmitoyl cysteine" evidence="3">
    <location>
        <position position="15"/>
    </location>
</feature>
<feature type="lipid moiety-binding region" description="S-diacylglycerol cysteine" evidence="3">
    <location>
        <position position="15"/>
    </location>
</feature>
<feature type="sequence conflict" description="In Ref. 1; CAA57238." evidence="3" ref="1">
    <original>A</original>
    <variation>P</variation>
    <location>
        <position position="234"/>
    </location>
</feature>
<organism>
    <name type="scientific">Borrelia garinii subsp. bavariensis (strain ATCC BAA-2496 / DSM 23469 / PBi)</name>
    <name type="common">Borreliella bavariensis</name>
    <dbReference type="NCBI Taxonomy" id="290434"/>
    <lineage>
        <taxon>Bacteria</taxon>
        <taxon>Pseudomonadati</taxon>
        <taxon>Spirochaetota</taxon>
        <taxon>Spirochaetia</taxon>
        <taxon>Spirochaetales</taxon>
        <taxon>Borreliaceae</taxon>
        <taxon>Borreliella</taxon>
    </lineage>
</organism>
<keyword id="KW-0997">Cell inner membrane</keyword>
<keyword id="KW-1003">Cell membrane</keyword>
<keyword id="KW-0449">Lipoprotein</keyword>
<keyword id="KW-0472">Membrane</keyword>
<keyword id="KW-0564">Palmitate</keyword>
<keyword id="KW-0732">Signal</keyword>
<keyword id="KW-0813">Transport</keyword>
<comment type="function">
    <text evidence="2">May be part of an ABC-type nucleoside uptake system involved in the purine salvage pathway.</text>
</comment>
<comment type="subunit">
    <text evidence="1">Monomer.</text>
</comment>
<comment type="subcellular location">
    <subcellularLocation>
        <location evidence="3">Cell inner membrane</location>
        <topology evidence="3">Lipid-anchor</topology>
    </subcellularLocation>
</comment>
<comment type="similarity">
    <text evidence="3">Belongs to the BMP lipoprotein family.</text>
</comment>
<sequence>MRIVIFILGILLTSCFAGNEIESGSSKIKISMLVDGVLDDKSFNSSANRALLRLEEDFPENIEKVFSSAASGVYSSYVSDLDNLKMNGSDLIWLVGYMLTDASLSVSLENPKISYGIIDPVYSDDVQIPKNLIGVVFRIEQGAFLAGYIAAKKSVSGKIGFIGGVKGDIVDAFRYGYEAGAKYADKGIEIVSEYSNSFSDVNIGRAIANKMYAKGIDIIHFAAGLAGIGVIEAAKELGDGYYVIGADQDQSHLAPRNFITSVIKNVGDALYLVTSEYLKNNNTWEGGKIIQMGLRDGVVGLSNANKFEYIKVIERKIVNEEIIVPYNHEGYEIFIKQILKL</sequence>
<accession>O31362</accession>
<accession>Q661N7</accession>
<reference key="1">
    <citation type="journal article" date="1997" name="J. Clin. Microbiol.">
        <title>Heterogeneity of BmpA (P39) among European isolates of Borrelia burgdorferi sensu lato and influence of interspecies variability on serodiagnosis.</title>
        <authorList>
            <person name="Roessler D."/>
            <person name="Hauser U."/>
            <person name="Wilske B."/>
        </authorList>
    </citation>
    <scope>NUCLEOTIDE SEQUENCE [GENOMIC DNA]</scope>
    <source>
        <strain>ATCC BAA-2496 / DSM 23469 / PBi</strain>
    </source>
</reference>
<reference key="2">
    <citation type="journal article" date="2004" name="Nucleic Acids Res.">
        <title>Comparative analysis of the Borrelia garinii genome.</title>
        <authorList>
            <person name="Gloeckner G."/>
            <person name="Lehmann R."/>
            <person name="Romualdi A."/>
            <person name="Pradella S."/>
            <person name="Schulte-Spechtel U."/>
            <person name="Schilhabel M."/>
            <person name="Wilske B."/>
            <person name="Suehnel J."/>
            <person name="Platzer M."/>
        </authorList>
    </citation>
    <scope>NUCLEOTIDE SEQUENCE [LARGE SCALE GENOMIC DNA]</scope>
    <source>
        <strain>ATCC BAA-2496 / DSM 23469 / PBi</strain>
    </source>
</reference>
<name>BMPB_BORGP</name>
<dbReference type="EMBL" id="X81518">
    <property type="protein sequence ID" value="CAA57238.1"/>
    <property type="molecule type" value="Genomic_DNA"/>
</dbReference>
<dbReference type="EMBL" id="CP000013">
    <property type="protein sequence ID" value="AAU07234.1"/>
    <property type="molecule type" value="Genomic_DNA"/>
</dbReference>
<dbReference type="RefSeq" id="WP_011193708.1">
    <property type="nucleotide sequence ID" value="NZ_CP028872.1"/>
</dbReference>
<dbReference type="SMR" id="O31362"/>
<dbReference type="GeneID" id="45161169"/>
<dbReference type="KEGG" id="bga:BG0381"/>
<dbReference type="eggNOG" id="COG1744">
    <property type="taxonomic scope" value="Bacteria"/>
</dbReference>
<dbReference type="HOGENOM" id="CLU_038813_0_2_12"/>
<dbReference type="OrthoDB" id="9769871at2"/>
<dbReference type="Proteomes" id="UP000002276">
    <property type="component" value="Chromosome"/>
</dbReference>
<dbReference type="GO" id="GO:0005886">
    <property type="term" value="C:plasma membrane"/>
    <property type="evidence" value="ECO:0007669"/>
    <property type="project" value="UniProtKB-SubCell"/>
</dbReference>
<dbReference type="CDD" id="cd06354">
    <property type="entry name" value="PBP1_PrnA-like"/>
    <property type="match status" value="1"/>
</dbReference>
<dbReference type="Gene3D" id="3.40.50.2300">
    <property type="match status" value="2"/>
</dbReference>
<dbReference type="InterPro" id="IPR050957">
    <property type="entry name" value="BMP_lipoprotein"/>
</dbReference>
<dbReference type="InterPro" id="IPR028082">
    <property type="entry name" value="Peripla_BP_I"/>
</dbReference>
<dbReference type="InterPro" id="IPR003760">
    <property type="entry name" value="PnrA-like"/>
</dbReference>
<dbReference type="PANTHER" id="PTHR34296:SF2">
    <property type="entry name" value="ABC TRANSPORTER GUANOSINE-BINDING PROTEIN NUPN"/>
    <property type="match status" value="1"/>
</dbReference>
<dbReference type="PANTHER" id="PTHR34296">
    <property type="entry name" value="TRANSCRIPTIONAL ACTIVATOR PROTEIN MED"/>
    <property type="match status" value="1"/>
</dbReference>
<dbReference type="Pfam" id="PF02608">
    <property type="entry name" value="Bmp"/>
    <property type="match status" value="1"/>
</dbReference>
<dbReference type="SUPFAM" id="SSF53822">
    <property type="entry name" value="Periplasmic binding protein-like I"/>
    <property type="match status" value="1"/>
</dbReference>
<dbReference type="PROSITE" id="PS51257">
    <property type="entry name" value="PROKAR_LIPOPROTEIN"/>
    <property type="match status" value="1"/>
</dbReference>
<protein>
    <recommendedName>
        <fullName>Basic membrane protein B</fullName>
    </recommendedName>
    <alternativeName>
        <fullName evidence="2">Probable substrate-binding protein BmpB</fullName>
    </alternativeName>
</protein>
<evidence type="ECO:0000250" key="1">
    <source>
        <dbReference type="UniProtKB" id="P0CL55"/>
    </source>
</evidence>
<evidence type="ECO:0000250" key="2">
    <source>
        <dbReference type="UniProtKB" id="Q45011"/>
    </source>
</evidence>
<evidence type="ECO:0000305" key="3"/>
<gene>
    <name type="primary">bmpB</name>
    <name type="ordered locus">BG0381</name>
</gene>
<proteinExistence type="inferred from homology"/>